<evidence type="ECO:0000255" key="1">
    <source>
        <dbReference type="HAMAP-Rule" id="MF_00013"/>
    </source>
</evidence>
<evidence type="ECO:0000255" key="2">
    <source>
        <dbReference type="PROSITE-ProRule" id="PRU01067"/>
    </source>
</evidence>
<proteinExistence type="inferred from homology"/>
<protein>
    <recommendedName>
        <fullName evidence="1">Octanoyltransferase</fullName>
        <ecNumber evidence="1">2.3.1.181</ecNumber>
    </recommendedName>
    <alternativeName>
        <fullName evidence="1">Lipoate-protein ligase B</fullName>
    </alternativeName>
    <alternativeName>
        <fullName evidence="1">Lipoyl/octanoyl transferase</fullName>
    </alternativeName>
    <alternativeName>
        <fullName evidence="1">Octanoyl-[acyl-carrier-protein]-protein N-octanoyltransferase</fullName>
    </alternativeName>
</protein>
<gene>
    <name evidence="1" type="primary">lipB</name>
    <name type="ordered locus">Sala_1350</name>
</gene>
<feature type="chain" id="PRO_1000001138" description="Octanoyltransferase">
    <location>
        <begin position="1"/>
        <end position="217"/>
    </location>
</feature>
<feature type="domain" description="BPL/LPL catalytic" evidence="2">
    <location>
        <begin position="35"/>
        <end position="214"/>
    </location>
</feature>
<feature type="active site" description="Acyl-thioester intermediate" evidence="1">
    <location>
        <position position="176"/>
    </location>
</feature>
<feature type="binding site" evidence="1">
    <location>
        <begin position="73"/>
        <end position="80"/>
    </location>
    <ligand>
        <name>substrate</name>
    </ligand>
</feature>
<feature type="binding site" evidence="1">
    <location>
        <begin position="145"/>
        <end position="147"/>
    </location>
    <ligand>
        <name>substrate</name>
    </ligand>
</feature>
<feature type="binding site" evidence="1">
    <location>
        <begin position="158"/>
        <end position="160"/>
    </location>
    <ligand>
        <name>substrate</name>
    </ligand>
</feature>
<feature type="site" description="Lowers pKa of active site Cys" evidence="1">
    <location>
        <position position="142"/>
    </location>
</feature>
<reference key="1">
    <citation type="journal article" date="2009" name="Proc. Natl. Acad. Sci. U.S.A.">
        <title>The genomic basis of trophic strategy in marine bacteria.</title>
        <authorList>
            <person name="Lauro F.M."/>
            <person name="McDougald D."/>
            <person name="Thomas T."/>
            <person name="Williams T.J."/>
            <person name="Egan S."/>
            <person name="Rice S."/>
            <person name="DeMaere M.Z."/>
            <person name="Ting L."/>
            <person name="Ertan H."/>
            <person name="Johnson J."/>
            <person name="Ferriera S."/>
            <person name="Lapidus A."/>
            <person name="Anderson I."/>
            <person name="Kyrpides N."/>
            <person name="Munk A.C."/>
            <person name="Detter C."/>
            <person name="Han C.S."/>
            <person name="Brown M.V."/>
            <person name="Robb F.T."/>
            <person name="Kjelleberg S."/>
            <person name="Cavicchioli R."/>
        </authorList>
    </citation>
    <scope>NUCLEOTIDE SEQUENCE [LARGE SCALE GENOMIC DNA]</scope>
    <source>
        <strain>DSM 13593 / LMG 18877 / RB2256</strain>
    </source>
</reference>
<keyword id="KW-0012">Acyltransferase</keyword>
<keyword id="KW-0963">Cytoplasm</keyword>
<keyword id="KW-1185">Reference proteome</keyword>
<keyword id="KW-0808">Transferase</keyword>
<comment type="function">
    <text evidence="1">Catalyzes the transfer of endogenously produced octanoic acid from octanoyl-acyl-carrier-protein onto the lipoyl domains of lipoate-dependent enzymes. Lipoyl-ACP can also act as a substrate although octanoyl-ACP is likely to be the physiological substrate.</text>
</comment>
<comment type="catalytic activity">
    <reaction evidence="1">
        <text>octanoyl-[ACP] + L-lysyl-[protein] = N(6)-octanoyl-L-lysyl-[protein] + holo-[ACP] + H(+)</text>
        <dbReference type="Rhea" id="RHEA:17665"/>
        <dbReference type="Rhea" id="RHEA-COMP:9636"/>
        <dbReference type="Rhea" id="RHEA-COMP:9685"/>
        <dbReference type="Rhea" id="RHEA-COMP:9752"/>
        <dbReference type="Rhea" id="RHEA-COMP:9928"/>
        <dbReference type="ChEBI" id="CHEBI:15378"/>
        <dbReference type="ChEBI" id="CHEBI:29969"/>
        <dbReference type="ChEBI" id="CHEBI:64479"/>
        <dbReference type="ChEBI" id="CHEBI:78463"/>
        <dbReference type="ChEBI" id="CHEBI:78809"/>
        <dbReference type="EC" id="2.3.1.181"/>
    </reaction>
</comment>
<comment type="pathway">
    <text evidence="1">Protein modification; protein lipoylation via endogenous pathway; protein N(6)-(lipoyl)lysine from octanoyl-[acyl-carrier-protein]: step 1/2.</text>
</comment>
<comment type="subcellular location">
    <subcellularLocation>
        <location evidence="1">Cytoplasm</location>
    </subcellularLocation>
</comment>
<comment type="miscellaneous">
    <text evidence="1">In the reaction, the free carboxyl group of octanoic acid is attached via an amide linkage to the epsilon-amino group of a specific lysine residue of lipoyl domains of lipoate-dependent enzymes.</text>
</comment>
<comment type="similarity">
    <text evidence="1">Belongs to the LipB family.</text>
</comment>
<sequence>MPSLPVPQWIVSPGLTDYAAALADMESRAAAIHADEAGERIWLLEHPPLYTAGTSADPAELLDPRFPVYDAGRGGRYTYHGPGQRVGYVQLDLTRRGRDVRAYVHALEGWVIDALALLGVKARRAEGRIGIWTDDVRGREAKIGAIGVRVKRWVTLHGFSLNVAPDLTHFTGIVPCGIAEYPVTSLAALGKATGFSEVDAALARTLPAFLDKLRPSD</sequence>
<dbReference type="EC" id="2.3.1.181" evidence="1"/>
<dbReference type="EMBL" id="CP000356">
    <property type="protein sequence ID" value="ABF53064.1"/>
    <property type="molecule type" value="Genomic_DNA"/>
</dbReference>
<dbReference type="RefSeq" id="WP_011541646.1">
    <property type="nucleotide sequence ID" value="NC_008048.1"/>
</dbReference>
<dbReference type="SMR" id="Q1GTF8"/>
<dbReference type="STRING" id="317655.Sala_1350"/>
<dbReference type="KEGG" id="sal:Sala_1350"/>
<dbReference type="eggNOG" id="COG0321">
    <property type="taxonomic scope" value="Bacteria"/>
</dbReference>
<dbReference type="HOGENOM" id="CLU_035168_3_0_5"/>
<dbReference type="OrthoDB" id="9787061at2"/>
<dbReference type="UniPathway" id="UPA00538">
    <property type="reaction ID" value="UER00592"/>
</dbReference>
<dbReference type="Proteomes" id="UP000006578">
    <property type="component" value="Chromosome"/>
</dbReference>
<dbReference type="GO" id="GO:0005737">
    <property type="term" value="C:cytoplasm"/>
    <property type="evidence" value="ECO:0007669"/>
    <property type="project" value="UniProtKB-SubCell"/>
</dbReference>
<dbReference type="GO" id="GO:0033819">
    <property type="term" value="F:lipoyl(octanoyl) transferase activity"/>
    <property type="evidence" value="ECO:0007669"/>
    <property type="project" value="UniProtKB-EC"/>
</dbReference>
<dbReference type="GO" id="GO:0036211">
    <property type="term" value="P:protein modification process"/>
    <property type="evidence" value="ECO:0007669"/>
    <property type="project" value="InterPro"/>
</dbReference>
<dbReference type="CDD" id="cd16444">
    <property type="entry name" value="LipB"/>
    <property type="match status" value="1"/>
</dbReference>
<dbReference type="Gene3D" id="3.30.930.10">
    <property type="entry name" value="Bira Bifunctional Protein, Domain 2"/>
    <property type="match status" value="1"/>
</dbReference>
<dbReference type="HAMAP" id="MF_00013">
    <property type="entry name" value="LipB"/>
    <property type="match status" value="1"/>
</dbReference>
<dbReference type="InterPro" id="IPR045864">
    <property type="entry name" value="aa-tRNA-synth_II/BPL/LPL"/>
</dbReference>
<dbReference type="InterPro" id="IPR004143">
    <property type="entry name" value="BPL_LPL_catalytic"/>
</dbReference>
<dbReference type="InterPro" id="IPR000544">
    <property type="entry name" value="Octanoyltransferase"/>
</dbReference>
<dbReference type="InterPro" id="IPR020605">
    <property type="entry name" value="Octanoyltransferase_CS"/>
</dbReference>
<dbReference type="NCBIfam" id="TIGR00214">
    <property type="entry name" value="lipB"/>
    <property type="match status" value="1"/>
</dbReference>
<dbReference type="NCBIfam" id="NF010921">
    <property type="entry name" value="PRK14341.1"/>
    <property type="match status" value="1"/>
</dbReference>
<dbReference type="NCBIfam" id="NF010925">
    <property type="entry name" value="PRK14345.1"/>
    <property type="match status" value="1"/>
</dbReference>
<dbReference type="PANTHER" id="PTHR10993:SF7">
    <property type="entry name" value="LIPOYLTRANSFERASE 2, MITOCHONDRIAL-RELATED"/>
    <property type="match status" value="1"/>
</dbReference>
<dbReference type="PANTHER" id="PTHR10993">
    <property type="entry name" value="OCTANOYLTRANSFERASE"/>
    <property type="match status" value="1"/>
</dbReference>
<dbReference type="Pfam" id="PF21948">
    <property type="entry name" value="LplA-B_cat"/>
    <property type="match status" value="1"/>
</dbReference>
<dbReference type="PIRSF" id="PIRSF016262">
    <property type="entry name" value="LPLase"/>
    <property type="match status" value="1"/>
</dbReference>
<dbReference type="SUPFAM" id="SSF55681">
    <property type="entry name" value="Class II aaRS and biotin synthetases"/>
    <property type="match status" value="1"/>
</dbReference>
<dbReference type="PROSITE" id="PS51733">
    <property type="entry name" value="BPL_LPL_CATALYTIC"/>
    <property type="match status" value="1"/>
</dbReference>
<dbReference type="PROSITE" id="PS01313">
    <property type="entry name" value="LIPB"/>
    <property type="match status" value="1"/>
</dbReference>
<organism>
    <name type="scientific">Sphingopyxis alaskensis (strain DSM 13593 / LMG 18877 / RB2256)</name>
    <name type="common">Sphingomonas alaskensis</name>
    <dbReference type="NCBI Taxonomy" id="317655"/>
    <lineage>
        <taxon>Bacteria</taxon>
        <taxon>Pseudomonadati</taxon>
        <taxon>Pseudomonadota</taxon>
        <taxon>Alphaproteobacteria</taxon>
        <taxon>Sphingomonadales</taxon>
        <taxon>Sphingomonadaceae</taxon>
        <taxon>Sphingopyxis</taxon>
    </lineage>
</organism>
<accession>Q1GTF8</accession>
<name>LIPB_SPHAL</name>